<reference key="1">
    <citation type="submission" date="2007-10" db="EMBL/GenBank/DDBJ databases">
        <title>Brucella canis ATCC 23365 whole genome shotgun sequencing project.</title>
        <authorList>
            <person name="Setubal J.C."/>
            <person name="Bowns C."/>
            <person name="Boyle S."/>
            <person name="Crasta O.R."/>
            <person name="Czar M.J."/>
            <person name="Dharmanolla C."/>
            <person name="Gillespie J.J."/>
            <person name="Kenyon R.W."/>
            <person name="Lu J."/>
            <person name="Mane S."/>
            <person name="Mohapatra S."/>
            <person name="Nagrani S."/>
            <person name="Purkayastha A."/>
            <person name="Rajasimha H.K."/>
            <person name="Shallom J.M."/>
            <person name="Shallom S."/>
            <person name="Shukla M."/>
            <person name="Snyder E.E."/>
            <person name="Sobral B.W."/>
            <person name="Wattam A.R."/>
            <person name="Will R."/>
            <person name="Williams K."/>
            <person name="Yoo H."/>
            <person name="Bruce D."/>
            <person name="Detter C."/>
            <person name="Munk C."/>
            <person name="Brettin T.S."/>
        </authorList>
    </citation>
    <scope>NUCLEOTIDE SEQUENCE [LARGE SCALE GENOMIC DNA]</scope>
    <source>
        <strain>ATCC 23365 / NCTC 10854 / RM-666</strain>
    </source>
</reference>
<dbReference type="EMBL" id="CP000872">
    <property type="protein sequence ID" value="ABX62273.1"/>
    <property type="molecule type" value="Genomic_DNA"/>
</dbReference>
<dbReference type="RefSeq" id="WP_002964332.1">
    <property type="nucleotide sequence ID" value="NC_010103.1"/>
</dbReference>
<dbReference type="SMR" id="A9M5L8"/>
<dbReference type="GeneID" id="97533554"/>
<dbReference type="KEGG" id="bcs:BCAN_A1224"/>
<dbReference type="HOGENOM" id="CLU_040469_3_2_5"/>
<dbReference type="PRO" id="PR:A9M5L8"/>
<dbReference type="Proteomes" id="UP000001385">
    <property type="component" value="Chromosome I"/>
</dbReference>
<dbReference type="GO" id="GO:0005829">
    <property type="term" value="C:cytosol"/>
    <property type="evidence" value="ECO:0007669"/>
    <property type="project" value="TreeGrafter"/>
</dbReference>
<dbReference type="GO" id="GO:0005524">
    <property type="term" value="F:ATP binding"/>
    <property type="evidence" value="ECO:0007669"/>
    <property type="project" value="UniProtKB-UniRule"/>
</dbReference>
<dbReference type="GO" id="GO:0016887">
    <property type="term" value="F:ATP hydrolysis activity"/>
    <property type="evidence" value="ECO:0007669"/>
    <property type="project" value="InterPro"/>
</dbReference>
<dbReference type="GO" id="GO:0140664">
    <property type="term" value="F:ATP-dependent DNA damage sensor activity"/>
    <property type="evidence" value="ECO:0007669"/>
    <property type="project" value="InterPro"/>
</dbReference>
<dbReference type="GO" id="GO:0003684">
    <property type="term" value="F:damaged DNA binding"/>
    <property type="evidence" value="ECO:0007669"/>
    <property type="project" value="UniProtKB-UniRule"/>
</dbReference>
<dbReference type="GO" id="GO:0003697">
    <property type="term" value="F:single-stranded DNA binding"/>
    <property type="evidence" value="ECO:0007669"/>
    <property type="project" value="UniProtKB-UniRule"/>
</dbReference>
<dbReference type="GO" id="GO:0006310">
    <property type="term" value="P:DNA recombination"/>
    <property type="evidence" value="ECO:0007669"/>
    <property type="project" value="UniProtKB-UniRule"/>
</dbReference>
<dbReference type="GO" id="GO:0006281">
    <property type="term" value="P:DNA repair"/>
    <property type="evidence" value="ECO:0007669"/>
    <property type="project" value="UniProtKB-UniRule"/>
</dbReference>
<dbReference type="GO" id="GO:0009432">
    <property type="term" value="P:SOS response"/>
    <property type="evidence" value="ECO:0007669"/>
    <property type="project" value="UniProtKB-UniRule"/>
</dbReference>
<dbReference type="CDD" id="cd00983">
    <property type="entry name" value="RecA"/>
    <property type="match status" value="1"/>
</dbReference>
<dbReference type="FunFam" id="3.40.50.300:FF:000087">
    <property type="entry name" value="Recombinase RecA"/>
    <property type="match status" value="1"/>
</dbReference>
<dbReference type="Gene3D" id="3.40.50.300">
    <property type="entry name" value="P-loop containing nucleotide triphosphate hydrolases"/>
    <property type="match status" value="1"/>
</dbReference>
<dbReference type="HAMAP" id="MF_00268">
    <property type="entry name" value="RecA"/>
    <property type="match status" value="1"/>
</dbReference>
<dbReference type="InterPro" id="IPR003593">
    <property type="entry name" value="AAA+_ATPase"/>
</dbReference>
<dbReference type="InterPro" id="IPR013765">
    <property type="entry name" value="DNA_recomb/repair_RecA"/>
</dbReference>
<dbReference type="InterPro" id="IPR020584">
    <property type="entry name" value="DNA_recomb/repair_RecA_CS"/>
</dbReference>
<dbReference type="InterPro" id="IPR027417">
    <property type="entry name" value="P-loop_NTPase"/>
</dbReference>
<dbReference type="InterPro" id="IPR049261">
    <property type="entry name" value="RecA-like_C"/>
</dbReference>
<dbReference type="InterPro" id="IPR049428">
    <property type="entry name" value="RecA-like_N"/>
</dbReference>
<dbReference type="InterPro" id="IPR020588">
    <property type="entry name" value="RecA_ATP-bd"/>
</dbReference>
<dbReference type="InterPro" id="IPR023400">
    <property type="entry name" value="RecA_C_sf"/>
</dbReference>
<dbReference type="InterPro" id="IPR020587">
    <property type="entry name" value="RecA_monomer-monomer_interface"/>
</dbReference>
<dbReference type="NCBIfam" id="TIGR02012">
    <property type="entry name" value="tigrfam_recA"/>
    <property type="match status" value="1"/>
</dbReference>
<dbReference type="PANTHER" id="PTHR45900:SF1">
    <property type="entry name" value="MITOCHONDRIAL DNA REPAIR PROTEIN RECA HOMOLOG-RELATED"/>
    <property type="match status" value="1"/>
</dbReference>
<dbReference type="PANTHER" id="PTHR45900">
    <property type="entry name" value="RECA"/>
    <property type="match status" value="1"/>
</dbReference>
<dbReference type="Pfam" id="PF00154">
    <property type="entry name" value="RecA"/>
    <property type="match status" value="1"/>
</dbReference>
<dbReference type="Pfam" id="PF21096">
    <property type="entry name" value="RecA_C"/>
    <property type="match status" value="1"/>
</dbReference>
<dbReference type="PRINTS" id="PR00142">
    <property type="entry name" value="RECA"/>
</dbReference>
<dbReference type="SMART" id="SM00382">
    <property type="entry name" value="AAA"/>
    <property type="match status" value="1"/>
</dbReference>
<dbReference type="SUPFAM" id="SSF52540">
    <property type="entry name" value="P-loop containing nucleoside triphosphate hydrolases"/>
    <property type="match status" value="1"/>
</dbReference>
<dbReference type="SUPFAM" id="SSF54752">
    <property type="entry name" value="RecA protein, C-terminal domain"/>
    <property type="match status" value="1"/>
</dbReference>
<dbReference type="PROSITE" id="PS00321">
    <property type="entry name" value="RECA_1"/>
    <property type="match status" value="1"/>
</dbReference>
<dbReference type="PROSITE" id="PS50162">
    <property type="entry name" value="RECA_2"/>
    <property type="match status" value="1"/>
</dbReference>
<dbReference type="PROSITE" id="PS50163">
    <property type="entry name" value="RECA_3"/>
    <property type="match status" value="1"/>
</dbReference>
<gene>
    <name evidence="1" type="primary">recA</name>
    <name type="ordered locus">BCAN_A1224</name>
</gene>
<evidence type="ECO:0000255" key="1">
    <source>
        <dbReference type="HAMAP-Rule" id="MF_00268"/>
    </source>
</evidence>
<comment type="function">
    <text evidence="1">Can catalyze the hydrolysis of ATP in the presence of single-stranded DNA, the ATP-dependent uptake of single-stranded DNA by duplex DNA, and the ATP-dependent hybridization of homologous single-stranded DNAs. It interacts with LexA causing its activation and leading to its autocatalytic cleavage.</text>
</comment>
<comment type="subcellular location">
    <subcellularLocation>
        <location evidence="1">Cytoplasm</location>
    </subcellularLocation>
</comment>
<comment type="similarity">
    <text evidence="1">Belongs to the RecA family.</text>
</comment>
<sequence>MSQNSLRLVEDNSVDKTKALDAALSQIERAFGKGSIMRLGQNDQVVEIETVSTGSLSLDIALGVGGLPKGRIVEIYGPESSGKTTLALHTIAEAQKKGGICAFVDAEHALDPVYARKLGVDLENLLISQPDTGEQALEITDTLVRSGAIDVLVVDSVAALTPRAEIEGEMGDSLPGLQARLMSQALRKLTGSISRSNCMVIFINQIRMKIGVMFGSPETTTGGNALKFYASVRLDIRRIGSIKERDEVVGNQTRVKVVKNKLAPPFKQVEFDIMYGAGVSKVGELVDLGVKAGVVEKSGAWFSYNSQRLGQGRENAKQYLKDNPEVAREIETTLRQNAGLIAEQFLDDGGPEEDAAGAAEM</sequence>
<proteinExistence type="inferred from homology"/>
<keyword id="KW-0067">ATP-binding</keyword>
<keyword id="KW-0963">Cytoplasm</keyword>
<keyword id="KW-0227">DNA damage</keyword>
<keyword id="KW-0233">DNA recombination</keyword>
<keyword id="KW-0234">DNA repair</keyword>
<keyword id="KW-0238">DNA-binding</keyword>
<keyword id="KW-0547">Nucleotide-binding</keyword>
<keyword id="KW-1185">Reference proteome</keyword>
<keyword id="KW-0742">SOS response</keyword>
<protein>
    <recommendedName>
        <fullName evidence="1">Protein RecA</fullName>
    </recommendedName>
    <alternativeName>
        <fullName evidence="1">Recombinase A</fullName>
    </alternativeName>
</protein>
<accession>A9M5L8</accession>
<organism>
    <name type="scientific">Brucella canis (strain ATCC 23365 / NCTC 10854 / RM-666)</name>
    <dbReference type="NCBI Taxonomy" id="483179"/>
    <lineage>
        <taxon>Bacteria</taxon>
        <taxon>Pseudomonadati</taxon>
        <taxon>Pseudomonadota</taxon>
        <taxon>Alphaproteobacteria</taxon>
        <taxon>Hyphomicrobiales</taxon>
        <taxon>Brucellaceae</taxon>
        <taxon>Brucella/Ochrobactrum group</taxon>
        <taxon>Brucella</taxon>
    </lineage>
</organism>
<name>RECA_BRUC2</name>
<feature type="chain" id="PRO_1000078663" description="Protein RecA">
    <location>
        <begin position="1"/>
        <end position="361"/>
    </location>
</feature>
<feature type="binding site" evidence="1">
    <location>
        <begin position="77"/>
        <end position="84"/>
    </location>
    <ligand>
        <name>ATP</name>
        <dbReference type="ChEBI" id="CHEBI:30616"/>
    </ligand>
</feature>